<organism>
    <name type="scientific">Emericella nidulans (strain FGSC A4 / ATCC 38163 / CBS 112.46 / NRRL 194 / M139)</name>
    <name type="common">Aspergillus nidulans</name>
    <dbReference type="NCBI Taxonomy" id="227321"/>
    <lineage>
        <taxon>Eukaryota</taxon>
        <taxon>Fungi</taxon>
        <taxon>Dikarya</taxon>
        <taxon>Ascomycota</taxon>
        <taxon>Pezizomycotina</taxon>
        <taxon>Eurotiomycetes</taxon>
        <taxon>Eurotiomycetidae</taxon>
        <taxon>Eurotiales</taxon>
        <taxon>Aspergillaceae</taxon>
        <taxon>Aspergillus</taxon>
        <taxon>Aspergillus subgen. Nidulantes</taxon>
    </lineage>
</organism>
<proteinExistence type="inferred from homology"/>
<protein>
    <recommendedName>
        <fullName>Small COPII coat GTPase sar1</fullName>
        <ecNumber>3.6.5.-</ecNumber>
    </recommendedName>
</protein>
<gene>
    <name type="primary">sar1</name>
    <name type="ORF">AN0411</name>
</gene>
<evidence type="ECO:0000250" key="1"/>
<evidence type="ECO:0000305" key="2"/>
<comment type="function">
    <text evidence="1">Small GTPase component of the coat protein complex II (COPII) which promotes the formation of transport vesicles from the endoplasmic reticulum (ER). The coat has two main functions, the physical deformation of the endoplasmic reticulum membrane into vesicles and the selection of cargo molecules. SAR1 controls the coat assembly in a stepwise manner. Activated sar1-GTP binds to membranes first and recruits the sec23/24 complex. These sec23/24-sar1 prebudding intermediates are then collected by the Sec13/31 complex as subunits polymerize to form coated transport vesicles. Conversion to sar1-GDP triggers coat release and recycles COPII subunits (By similarity).</text>
</comment>
<comment type="catalytic activity">
    <reaction>
        <text>GTP + H2O = GDP + phosphate + H(+)</text>
        <dbReference type="Rhea" id="RHEA:19669"/>
        <dbReference type="ChEBI" id="CHEBI:15377"/>
        <dbReference type="ChEBI" id="CHEBI:15378"/>
        <dbReference type="ChEBI" id="CHEBI:37565"/>
        <dbReference type="ChEBI" id="CHEBI:43474"/>
        <dbReference type="ChEBI" id="CHEBI:58189"/>
    </reaction>
</comment>
<comment type="subunit">
    <text evidence="1">COPII is composed of at least 5 proteins: the sec23/24 complex, the sec13/31 complex and sar1.</text>
</comment>
<comment type="subcellular location">
    <subcellularLocation>
        <location evidence="1">Cytoplasmic vesicle</location>
        <location evidence="1">COPII-coated vesicle membrane</location>
        <topology evidence="1">Peripheral membrane protein</topology>
        <orientation evidence="1">Cytoplasmic side</orientation>
    </subcellularLocation>
    <subcellularLocation>
        <location evidence="1">Endoplasmic reticulum membrane</location>
        <topology evidence="1">Peripheral membrane protein</topology>
        <orientation evidence="1">Cytoplasmic side</orientation>
    </subcellularLocation>
    <subcellularLocation>
        <location evidence="1">Golgi apparatus membrane</location>
        <topology evidence="1">Peripheral membrane protein</topology>
        <orientation evidence="1">Cytoplasmic side</orientation>
    </subcellularLocation>
</comment>
<comment type="similarity">
    <text evidence="2">Belongs to the small GTPase superfamily. SAR1 family.</text>
</comment>
<keyword id="KW-0968">Cytoplasmic vesicle</keyword>
<keyword id="KW-0256">Endoplasmic reticulum</keyword>
<keyword id="KW-0931">ER-Golgi transport</keyword>
<keyword id="KW-0333">Golgi apparatus</keyword>
<keyword id="KW-0342">GTP-binding</keyword>
<keyword id="KW-0378">Hydrolase</keyword>
<keyword id="KW-0472">Membrane</keyword>
<keyword id="KW-0547">Nucleotide-binding</keyword>
<keyword id="KW-0653">Protein transport</keyword>
<keyword id="KW-1185">Reference proteome</keyword>
<keyword id="KW-0813">Transport</keyword>
<dbReference type="EC" id="3.6.5.-"/>
<dbReference type="EMBL" id="AACD01000007">
    <property type="protein sequence ID" value="EAA66510.1"/>
    <property type="molecule type" value="Genomic_DNA"/>
</dbReference>
<dbReference type="EMBL" id="BN001308">
    <property type="protein sequence ID" value="CBF89540.1"/>
    <property type="molecule type" value="Genomic_DNA"/>
</dbReference>
<dbReference type="RefSeq" id="XP_658015.1">
    <property type="nucleotide sequence ID" value="XM_652923.1"/>
</dbReference>
<dbReference type="SMR" id="Q5BGB9"/>
<dbReference type="FunCoup" id="Q5BGB9">
    <property type="interactions" value="912"/>
</dbReference>
<dbReference type="STRING" id="227321.Q5BGB9"/>
<dbReference type="EnsemblFungi" id="CBF89540">
    <property type="protein sequence ID" value="CBF89540"/>
    <property type="gene ID" value="ANIA_00411"/>
</dbReference>
<dbReference type="KEGG" id="ani:ANIA_00411"/>
<dbReference type="eggNOG" id="KOG0077">
    <property type="taxonomic scope" value="Eukaryota"/>
</dbReference>
<dbReference type="HOGENOM" id="CLU_040729_6_0_1"/>
<dbReference type="InParanoid" id="Q5BGB9"/>
<dbReference type="OMA" id="GLWNKHG"/>
<dbReference type="OrthoDB" id="2011769at2759"/>
<dbReference type="Proteomes" id="UP000000560">
    <property type="component" value="Chromosome VIII"/>
</dbReference>
<dbReference type="GO" id="GO:0030127">
    <property type="term" value="C:COPII vesicle coat"/>
    <property type="evidence" value="ECO:0000318"/>
    <property type="project" value="GO_Central"/>
</dbReference>
<dbReference type="GO" id="GO:0070971">
    <property type="term" value="C:endoplasmic reticulum exit site"/>
    <property type="evidence" value="ECO:0000318"/>
    <property type="project" value="GO_Central"/>
</dbReference>
<dbReference type="GO" id="GO:0005789">
    <property type="term" value="C:endoplasmic reticulum membrane"/>
    <property type="evidence" value="ECO:0007669"/>
    <property type="project" value="UniProtKB-SubCell"/>
</dbReference>
<dbReference type="GO" id="GO:0000139">
    <property type="term" value="C:Golgi membrane"/>
    <property type="evidence" value="ECO:0007669"/>
    <property type="project" value="UniProtKB-SubCell"/>
</dbReference>
<dbReference type="GO" id="GO:0044233">
    <property type="term" value="C:mitochondria-associated endoplasmic reticulum membrane contact site"/>
    <property type="evidence" value="ECO:0007669"/>
    <property type="project" value="EnsemblFungi"/>
</dbReference>
<dbReference type="GO" id="GO:0005739">
    <property type="term" value="C:mitochondrion"/>
    <property type="evidence" value="ECO:0007669"/>
    <property type="project" value="GOC"/>
</dbReference>
<dbReference type="GO" id="GO:0005525">
    <property type="term" value="F:GTP binding"/>
    <property type="evidence" value="ECO:0007669"/>
    <property type="project" value="UniProtKB-KW"/>
</dbReference>
<dbReference type="GO" id="GO:0003924">
    <property type="term" value="F:GTPase activity"/>
    <property type="evidence" value="ECO:0000318"/>
    <property type="project" value="GO_Central"/>
</dbReference>
<dbReference type="GO" id="GO:0090158">
    <property type="term" value="P:endoplasmic reticulum membrane organization"/>
    <property type="evidence" value="ECO:0007669"/>
    <property type="project" value="EnsemblFungi"/>
</dbReference>
<dbReference type="GO" id="GO:0006888">
    <property type="term" value="P:endoplasmic reticulum to Golgi vesicle-mediated transport"/>
    <property type="evidence" value="ECO:0000318"/>
    <property type="project" value="GO_Central"/>
</dbReference>
<dbReference type="GO" id="GO:0006886">
    <property type="term" value="P:intracellular protein transport"/>
    <property type="evidence" value="ECO:0007669"/>
    <property type="project" value="InterPro"/>
</dbReference>
<dbReference type="GO" id="GO:0061024">
    <property type="term" value="P:membrane organization"/>
    <property type="evidence" value="ECO:0000318"/>
    <property type="project" value="GO_Central"/>
</dbReference>
<dbReference type="GO" id="GO:0000266">
    <property type="term" value="P:mitochondrial fission"/>
    <property type="evidence" value="ECO:0007669"/>
    <property type="project" value="EnsemblFungi"/>
</dbReference>
<dbReference type="GO" id="GO:0007006">
    <property type="term" value="P:mitochondrial membrane organization"/>
    <property type="evidence" value="ECO:0007669"/>
    <property type="project" value="EnsemblFungi"/>
</dbReference>
<dbReference type="GO" id="GO:0006998">
    <property type="term" value="P:nuclear envelope organization"/>
    <property type="evidence" value="ECO:0007669"/>
    <property type="project" value="EnsemblFungi"/>
</dbReference>
<dbReference type="GO" id="GO:1902953">
    <property type="term" value="P:positive regulation of ER to Golgi vesicle-mediated transport"/>
    <property type="evidence" value="ECO:0007669"/>
    <property type="project" value="EnsemblFungi"/>
</dbReference>
<dbReference type="GO" id="GO:0070863">
    <property type="term" value="P:positive regulation of protein exit from endoplasmic reticulum"/>
    <property type="evidence" value="ECO:0007669"/>
    <property type="project" value="EnsemblFungi"/>
</dbReference>
<dbReference type="GO" id="GO:0003400">
    <property type="term" value="P:regulation of COPII vesicle coating"/>
    <property type="evidence" value="ECO:0000318"/>
    <property type="project" value="GO_Central"/>
</dbReference>
<dbReference type="GO" id="GO:0016050">
    <property type="term" value="P:vesicle organization"/>
    <property type="evidence" value="ECO:0000318"/>
    <property type="project" value="GO_Central"/>
</dbReference>
<dbReference type="CDD" id="cd00879">
    <property type="entry name" value="Sar1"/>
    <property type="match status" value="1"/>
</dbReference>
<dbReference type="FunFam" id="3.40.50.300:FF:000161">
    <property type="entry name" value="Small COPII coat GTPase"/>
    <property type="match status" value="1"/>
</dbReference>
<dbReference type="Gene3D" id="3.40.50.300">
    <property type="entry name" value="P-loop containing nucleotide triphosphate hydrolases"/>
    <property type="match status" value="1"/>
</dbReference>
<dbReference type="InterPro" id="IPR027417">
    <property type="entry name" value="P-loop_NTPase"/>
</dbReference>
<dbReference type="InterPro" id="IPR005225">
    <property type="entry name" value="Small_GTP-bd"/>
</dbReference>
<dbReference type="InterPro" id="IPR006689">
    <property type="entry name" value="Small_GTPase_ARF/SAR"/>
</dbReference>
<dbReference type="InterPro" id="IPR006687">
    <property type="entry name" value="Small_GTPase_SAR1"/>
</dbReference>
<dbReference type="NCBIfam" id="TIGR00231">
    <property type="entry name" value="small_GTP"/>
    <property type="match status" value="1"/>
</dbReference>
<dbReference type="PANTHER" id="PTHR45684">
    <property type="entry name" value="RE74312P"/>
    <property type="match status" value="1"/>
</dbReference>
<dbReference type="Pfam" id="PF00025">
    <property type="entry name" value="Arf"/>
    <property type="match status" value="1"/>
</dbReference>
<dbReference type="PRINTS" id="PR00328">
    <property type="entry name" value="SAR1GTPBP"/>
</dbReference>
<dbReference type="SMART" id="SM00177">
    <property type="entry name" value="ARF"/>
    <property type="match status" value="1"/>
</dbReference>
<dbReference type="SMART" id="SM00178">
    <property type="entry name" value="SAR"/>
    <property type="match status" value="1"/>
</dbReference>
<dbReference type="SUPFAM" id="SSF52540">
    <property type="entry name" value="P-loop containing nucleoside triphosphate hydrolases"/>
    <property type="match status" value="1"/>
</dbReference>
<dbReference type="PROSITE" id="PS51422">
    <property type="entry name" value="SAR1"/>
    <property type="match status" value="1"/>
</dbReference>
<accession>Q5BGB9</accession>
<accession>C8VTH5</accession>
<sequence length="189" mass="21433">MWIINWFYDILASLGLLNKHAKLLFLGLDNAGKTTLLHMLKNDRVAILSPTAHPTSEELVIGNNRFTTFDLGGHQQARRLWKDYFPEVSGIVFLVDAKDHERFPESKAELDALLAMEELSKVPFLVLGNKIDHPDAVSEDELRHQLGLYQTTGKGKVPLEGIRPIEVFMCSVVMRQGYGEGIRWLSQYV</sequence>
<feature type="chain" id="PRO_0000295515" description="Small COPII coat GTPase sar1">
    <location>
        <begin position="1"/>
        <end position="189"/>
    </location>
</feature>
<feature type="binding site" evidence="1">
    <location>
        <begin position="27"/>
        <end position="34"/>
    </location>
    <ligand>
        <name>GTP</name>
        <dbReference type="ChEBI" id="CHEBI:37565"/>
    </ligand>
</feature>
<feature type="binding site" evidence="1">
    <location>
        <begin position="70"/>
        <end position="73"/>
    </location>
    <ligand>
        <name>GTP</name>
        <dbReference type="ChEBI" id="CHEBI:37565"/>
    </ligand>
</feature>
<feature type="binding site" evidence="1">
    <location>
        <begin position="129"/>
        <end position="132"/>
    </location>
    <ligand>
        <name>GTP</name>
        <dbReference type="ChEBI" id="CHEBI:37565"/>
    </ligand>
</feature>
<reference key="1">
    <citation type="journal article" date="2005" name="Nature">
        <title>Sequencing of Aspergillus nidulans and comparative analysis with A. fumigatus and A. oryzae.</title>
        <authorList>
            <person name="Galagan J.E."/>
            <person name="Calvo S.E."/>
            <person name="Cuomo C."/>
            <person name="Ma L.-J."/>
            <person name="Wortman J.R."/>
            <person name="Batzoglou S."/>
            <person name="Lee S.-I."/>
            <person name="Bastuerkmen M."/>
            <person name="Spevak C.C."/>
            <person name="Clutterbuck J."/>
            <person name="Kapitonov V."/>
            <person name="Jurka J."/>
            <person name="Scazzocchio C."/>
            <person name="Farman M.L."/>
            <person name="Butler J."/>
            <person name="Purcell S."/>
            <person name="Harris S."/>
            <person name="Braus G.H."/>
            <person name="Draht O."/>
            <person name="Busch S."/>
            <person name="D'Enfert C."/>
            <person name="Bouchier C."/>
            <person name="Goldman G.H."/>
            <person name="Bell-Pedersen D."/>
            <person name="Griffiths-Jones S."/>
            <person name="Doonan J.H."/>
            <person name="Yu J."/>
            <person name="Vienken K."/>
            <person name="Pain A."/>
            <person name="Freitag M."/>
            <person name="Selker E.U."/>
            <person name="Archer D.B."/>
            <person name="Penalva M.A."/>
            <person name="Oakley B.R."/>
            <person name="Momany M."/>
            <person name="Tanaka T."/>
            <person name="Kumagai T."/>
            <person name="Asai K."/>
            <person name="Machida M."/>
            <person name="Nierman W.C."/>
            <person name="Denning D.W."/>
            <person name="Caddick M.X."/>
            <person name="Hynes M."/>
            <person name="Paoletti M."/>
            <person name="Fischer R."/>
            <person name="Miller B.L."/>
            <person name="Dyer P.S."/>
            <person name="Sachs M.S."/>
            <person name="Osmani S.A."/>
            <person name="Birren B.W."/>
        </authorList>
    </citation>
    <scope>NUCLEOTIDE SEQUENCE [LARGE SCALE GENOMIC DNA]</scope>
    <source>
        <strain>FGSC A4 / ATCC 38163 / CBS 112.46 / NRRL 194 / M139</strain>
    </source>
</reference>
<reference key="2">
    <citation type="journal article" date="2009" name="Fungal Genet. Biol.">
        <title>The 2008 update of the Aspergillus nidulans genome annotation: a community effort.</title>
        <authorList>
            <person name="Wortman J.R."/>
            <person name="Gilsenan J.M."/>
            <person name="Joardar V."/>
            <person name="Deegan J."/>
            <person name="Clutterbuck J."/>
            <person name="Andersen M.R."/>
            <person name="Archer D."/>
            <person name="Bencina M."/>
            <person name="Braus G."/>
            <person name="Coutinho P."/>
            <person name="von Dohren H."/>
            <person name="Doonan J."/>
            <person name="Driessen A.J."/>
            <person name="Durek P."/>
            <person name="Espeso E."/>
            <person name="Fekete E."/>
            <person name="Flipphi M."/>
            <person name="Estrada C.G."/>
            <person name="Geysens S."/>
            <person name="Goldman G."/>
            <person name="de Groot P.W."/>
            <person name="Hansen K."/>
            <person name="Harris S.D."/>
            <person name="Heinekamp T."/>
            <person name="Helmstaedt K."/>
            <person name="Henrissat B."/>
            <person name="Hofmann G."/>
            <person name="Homan T."/>
            <person name="Horio T."/>
            <person name="Horiuchi H."/>
            <person name="James S."/>
            <person name="Jones M."/>
            <person name="Karaffa L."/>
            <person name="Karanyi Z."/>
            <person name="Kato M."/>
            <person name="Keller N."/>
            <person name="Kelly D.E."/>
            <person name="Kiel J.A."/>
            <person name="Kim J.M."/>
            <person name="van der Klei I.J."/>
            <person name="Klis F.M."/>
            <person name="Kovalchuk A."/>
            <person name="Krasevec N."/>
            <person name="Kubicek C.P."/>
            <person name="Liu B."/>
            <person name="Maccabe A."/>
            <person name="Meyer V."/>
            <person name="Mirabito P."/>
            <person name="Miskei M."/>
            <person name="Mos M."/>
            <person name="Mullins J."/>
            <person name="Nelson D.R."/>
            <person name="Nielsen J."/>
            <person name="Oakley B.R."/>
            <person name="Osmani S.A."/>
            <person name="Pakula T."/>
            <person name="Paszewski A."/>
            <person name="Paulsen I."/>
            <person name="Pilsyk S."/>
            <person name="Pocsi I."/>
            <person name="Punt P.J."/>
            <person name="Ram A.F."/>
            <person name="Ren Q."/>
            <person name="Robellet X."/>
            <person name="Robson G."/>
            <person name="Seiboth B."/>
            <person name="van Solingen P."/>
            <person name="Specht T."/>
            <person name="Sun J."/>
            <person name="Taheri-Talesh N."/>
            <person name="Takeshita N."/>
            <person name="Ussery D."/>
            <person name="vanKuyk P.A."/>
            <person name="Visser H."/>
            <person name="van de Vondervoort P.J."/>
            <person name="de Vries R.P."/>
            <person name="Walton J."/>
            <person name="Xiang X."/>
            <person name="Xiong Y."/>
            <person name="Zeng A.P."/>
            <person name="Brandt B.W."/>
            <person name="Cornell M.J."/>
            <person name="van den Hondel C.A."/>
            <person name="Visser J."/>
            <person name="Oliver S.G."/>
            <person name="Turner G."/>
        </authorList>
    </citation>
    <scope>GENOME REANNOTATION</scope>
    <source>
        <strain>FGSC A4 / ATCC 38163 / CBS 112.46 / NRRL 194 / M139</strain>
    </source>
</reference>
<name>SAR1_EMENI</name>